<keyword id="KW-0028">Amino-acid biosynthesis</keyword>
<keyword id="KW-0067">ATP-binding</keyword>
<keyword id="KW-0963">Cytoplasm</keyword>
<keyword id="KW-0328">Glycosyltransferase</keyword>
<keyword id="KW-0368">Histidine biosynthesis</keyword>
<keyword id="KW-0460">Magnesium</keyword>
<keyword id="KW-0479">Metal-binding</keyword>
<keyword id="KW-0547">Nucleotide-binding</keyword>
<keyword id="KW-0808">Transferase</keyword>
<evidence type="ECO:0000255" key="1">
    <source>
        <dbReference type="HAMAP-Rule" id="MF_00079"/>
    </source>
</evidence>
<protein>
    <recommendedName>
        <fullName evidence="1">ATP phosphoribosyltransferase</fullName>
        <shortName evidence="1">ATP-PRT</shortName>
        <shortName evidence="1">ATP-PRTase</shortName>
        <ecNumber evidence="1">2.4.2.17</ecNumber>
    </recommendedName>
</protein>
<organism>
    <name type="scientific">Methanosarcina mazei (strain ATCC BAA-159 / DSM 3647 / Goe1 / Go1 / JCM 11833 / OCM 88)</name>
    <name type="common">Methanosarcina frisia</name>
    <dbReference type="NCBI Taxonomy" id="192952"/>
    <lineage>
        <taxon>Archaea</taxon>
        <taxon>Methanobacteriati</taxon>
        <taxon>Methanobacteriota</taxon>
        <taxon>Stenosarchaea group</taxon>
        <taxon>Methanomicrobia</taxon>
        <taxon>Methanosarcinales</taxon>
        <taxon>Methanosarcinaceae</taxon>
        <taxon>Methanosarcina</taxon>
    </lineage>
</organism>
<feature type="chain" id="PRO_0000151884" description="ATP phosphoribosyltransferase">
    <location>
        <begin position="1"/>
        <end position="289"/>
    </location>
</feature>
<dbReference type="EC" id="2.4.2.17" evidence="1"/>
<dbReference type="EMBL" id="AE008384">
    <property type="protein sequence ID" value="AAM31199.1"/>
    <property type="molecule type" value="Genomic_DNA"/>
</dbReference>
<dbReference type="RefSeq" id="WP_011033449.1">
    <property type="nucleotide sequence ID" value="NC_003901.1"/>
</dbReference>
<dbReference type="SMR" id="Q8PWS3"/>
<dbReference type="GeneID" id="82160548"/>
<dbReference type="KEGG" id="mma:MM_1503"/>
<dbReference type="PATRIC" id="fig|192952.21.peg.1735"/>
<dbReference type="eggNOG" id="arCOG02208">
    <property type="taxonomic scope" value="Archaea"/>
</dbReference>
<dbReference type="HOGENOM" id="CLU_038115_1_0_2"/>
<dbReference type="UniPathway" id="UPA00031">
    <property type="reaction ID" value="UER00006"/>
</dbReference>
<dbReference type="Proteomes" id="UP000000595">
    <property type="component" value="Chromosome"/>
</dbReference>
<dbReference type="GO" id="GO:0005737">
    <property type="term" value="C:cytoplasm"/>
    <property type="evidence" value="ECO:0007669"/>
    <property type="project" value="UniProtKB-SubCell"/>
</dbReference>
<dbReference type="GO" id="GO:0005524">
    <property type="term" value="F:ATP binding"/>
    <property type="evidence" value="ECO:0007669"/>
    <property type="project" value="UniProtKB-KW"/>
</dbReference>
<dbReference type="GO" id="GO:0003879">
    <property type="term" value="F:ATP phosphoribosyltransferase activity"/>
    <property type="evidence" value="ECO:0007669"/>
    <property type="project" value="UniProtKB-UniRule"/>
</dbReference>
<dbReference type="GO" id="GO:0000287">
    <property type="term" value="F:magnesium ion binding"/>
    <property type="evidence" value="ECO:0007669"/>
    <property type="project" value="UniProtKB-UniRule"/>
</dbReference>
<dbReference type="GO" id="GO:0000105">
    <property type="term" value="P:L-histidine biosynthetic process"/>
    <property type="evidence" value="ECO:0007669"/>
    <property type="project" value="UniProtKB-UniRule"/>
</dbReference>
<dbReference type="CDD" id="cd13594">
    <property type="entry name" value="PBP2_HisGL4"/>
    <property type="match status" value="1"/>
</dbReference>
<dbReference type="FunFam" id="3.30.70.120:FF:000002">
    <property type="entry name" value="ATP phosphoribosyltransferase"/>
    <property type="match status" value="1"/>
</dbReference>
<dbReference type="FunFam" id="3.40.190.10:FF:000082">
    <property type="entry name" value="ATP phosphoribosyltransferase"/>
    <property type="match status" value="1"/>
</dbReference>
<dbReference type="Gene3D" id="3.30.70.120">
    <property type="match status" value="1"/>
</dbReference>
<dbReference type="Gene3D" id="3.40.190.10">
    <property type="entry name" value="Periplasmic binding protein-like II"/>
    <property type="match status" value="2"/>
</dbReference>
<dbReference type="HAMAP" id="MF_00079">
    <property type="entry name" value="HisG_Long"/>
    <property type="match status" value="1"/>
</dbReference>
<dbReference type="InterPro" id="IPR020621">
    <property type="entry name" value="ATP-PRT_HisG_long"/>
</dbReference>
<dbReference type="InterPro" id="IPR013820">
    <property type="entry name" value="ATP_PRibTrfase_cat"/>
</dbReference>
<dbReference type="InterPro" id="IPR018198">
    <property type="entry name" value="ATP_PRibTrfase_CS"/>
</dbReference>
<dbReference type="InterPro" id="IPR001348">
    <property type="entry name" value="ATP_PRibTrfase_HisG"/>
</dbReference>
<dbReference type="InterPro" id="IPR013115">
    <property type="entry name" value="HisG_C"/>
</dbReference>
<dbReference type="InterPro" id="IPR011322">
    <property type="entry name" value="N-reg_PII-like_a/b"/>
</dbReference>
<dbReference type="InterPro" id="IPR015867">
    <property type="entry name" value="N-reg_PII/ATP_PRibTrfase_C"/>
</dbReference>
<dbReference type="NCBIfam" id="TIGR00070">
    <property type="entry name" value="hisG"/>
    <property type="match status" value="1"/>
</dbReference>
<dbReference type="NCBIfam" id="TIGR03455">
    <property type="entry name" value="HisG_C-term"/>
    <property type="match status" value="1"/>
</dbReference>
<dbReference type="PANTHER" id="PTHR21403:SF10">
    <property type="entry name" value="ATP PHOSPHORIBOSYLTRANSFERASE"/>
    <property type="match status" value="1"/>
</dbReference>
<dbReference type="PANTHER" id="PTHR21403">
    <property type="entry name" value="ATP PHOSPHORIBOSYLTRANSFERASE ATP-PRTASE"/>
    <property type="match status" value="1"/>
</dbReference>
<dbReference type="Pfam" id="PF01634">
    <property type="entry name" value="HisG"/>
    <property type="match status" value="1"/>
</dbReference>
<dbReference type="Pfam" id="PF08029">
    <property type="entry name" value="HisG_C"/>
    <property type="match status" value="1"/>
</dbReference>
<dbReference type="SUPFAM" id="SSF54913">
    <property type="entry name" value="GlnB-like"/>
    <property type="match status" value="1"/>
</dbReference>
<dbReference type="SUPFAM" id="SSF53850">
    <property type="entry name" value="Periplasmic binding protein-like II"/>
    <property type="match status" value="1"/>
</dbReference>
<dbReference type="PROSITE" id="PS01316">
    <property type="entry name" value="ATP_P_PHORIBOSYLTR"/>
    <property type="match status" value="1"/>
</dbReference>
<proteinExistence type="inferred from homology"/>
<accession>Q8PWS3</accession>
<comment type="function">
    <text evidence="1">Catalyzes the condensation of ATP and 5-phosphoribose 1-diphosphate to form N'-(5'-phosphoribosyl)-ATP (PR-ATP). Has a crucial role in the pathway because the rate of histidine biosynthesis seems to be controlled primarily by regulation of HisG enzymatic activity.</text>
</comment>
<comment type="catalytic activity">
    <reaction evidence="1">
        <text>1-(5-phospho-beta-D-ribosyl)-ATP + diphosphate = 5-phospho-alpha-D-ribose 1-diphosphate + ATP</text>
        <dbReference type="Rhea" id="RHEA:18473"/>
        <dbReference type="ChEBI" id="CHEBI:30616"/>
        <dbReference type="ChEBI" id="CHEBI:33019"/>
        <dbReference type="ChEBI" id="CHEBI:58017"/>
        <dbReference type="ChEBI" id="CHEBI:73183"/>
        <dbReference type="EC" id="2.4.2.17"/>
    </reaction>
</comment>
<comment type="cofactor">
    <cofactor evidence="1">
        <name>Mg(2+)</name>
        <dbReference type="ChEBI" id="CHEBI:18420"/>
    </cofactor>
</comment>
<comment type="activity regulation">
    <text evidence="1">Feedback inhibited by histidine.</text>
</comment>
<comment type="pathway">
    <text evidence="1">Amino-acid biosynthesis; L-histidine biosynthesis; L-histidine from 5-phospho-alpha-D-ribose 1-diphosphate: step 1/9.</text>
</comment>
<comment type="subcellular location">
    <subcellularLocation>
        <location evidence="1">Cytoplasm</location>
    </subcellularLocation>
</comment>
<comment type="similarity">
    <text evidence="1">Belongs to the ATP phosphoribosyltransferase family. Long subfamily.</text>
</comment>
<gene>
    <name evidence="1" type="primary">hisG</name>
    <name type="ordered locus">MM_1503</name>
</gene>
<sequence>MIRIAIPNKGRLYEPTISIFKDAGLPISGGAESRKLFAKTTDPDIHILFARAADIPEYVQDGAADVGITGMDLITERGANVEALLDLKFGRANLVLAVPEDSDFEKAQDLEGKKVATEFPEITRRYFEKLGVNVNVIKVSGACEMTPHVGIADAIVDISSSGTTLLINHLKAIDMAFSSTVYLIANKESLRTKEKILDIKTAFESVLNAKKKRYLMMNVPESSLKAVKEVLPGMSGPTVMKVESSKFSEESILAVHAVVDADLIFTIVNRLKKVGARDVLVVPIERIMP</sequence>
<reference key="1">
    <citation type="journal article" date="2002" name="J. Mol. Microbiol. Biotechnol.">
        <title>The genome of Methanosarcina mazei: evidence for lateral gene transfer between Bacteria and Archaea.</title>
        <authorList>
            <person name="Deppenmeier U."/>
            <person name="Johann A."/>
            <person name="Hartsch T."/>
            <person name="Merkl R."/>
            <person name="Schmitz R.A."/>
            <person name="Martinez-Arias R."/>
            <person name="Henne A."/>
            <person name="Wiezer A."/>
            <person name="Baeumer S."/>
            <person name="Jacobi C."/>
            <person name="Brueggemann H."/>
            <person name="Lienard T."/>
            <person name="Christmann A."/>
            <person name="Boemecke M."/>
            <person name="Steckel S."/>
            <person name="Bhattacharyya A."/>
            <person name="Lykidis A."/>
            <person name="Overbeek R."/>
            <person name="Klenk H.-P."/>
            <person name="Gunsalus R.P."/>
            <person name="Fritz H.-J."/>
            <person name="Gottschalk G."/>
        </authorList>
    </citation>
    <scope>NUCLEOTIDE SEQUENCE [LARGE SCALE GENOMIC DNA]</scope>
    <source>
        <strain>ATCC BAA-159 / DSM 3647 / Goe1 / Go1 / JCM 11833 / OCM 88</strain>
    </source>
</reference>
<name>HIS1_METMA</name>